<sequence>MSKVKSITRESWILSTFPEWGSWLNEEIEQEQVAPGTFAMWWLGCTGIWLKSEGGTNVCVDFWCGTGKQSHGNPLMKQGHQMQRMAGVKKLQPNLRTTPFVLDPFAIRQIDAVLATHDHNDHIDVNVAAAVMQNCADDVPFIGPKTCVDLWIGWGVPKERCIVVKPGDVVKVKDIEIHALDAFDRTALITLPADQKAAGVLPDGMDDRAVNYLFKTPGGSLYHSGDSHYSNYYAKHGNEHQIDVALGSYGENPRGITDKMTSADMLRMGEALNAKVVIPFHHDIWSNFQADPQEIRVLWEMKKDRLKYGFKPFIWQVGGKFTWPLDKDNFEYHYPRGFDDCFTIEPDLPFKSFL</sequence>
<reference key="1">
    <citation type="journal article" date="2009" name="PLoS Genet.">
        <title>Organised genome dynamics in the Escherichia coli species results in highly diverse adaptive paths.</title>
        <authorList>
            <person name="Touchon M."/>
            <person name="Hoede C."/>
            <person name="Tenaillon O."/>
            <person name="Barbe V."/>
            <person name="Baeriswyl S."/>
            <person name="Bidet P."/>
            <person name="Bingen E."/>
            <person name="Bonacorsi S."/>
            <person name="Bouchier C."/>
            <person name="Bouvet O."/>
            <person name="Calteau A."/>
            <person name="Chiapello H."/>
            <person name="Clermont O."/>
            <person name="Cruveiller S."/>
            <person name="Danchin A."/>
            <person name="Diard M."/>
            <person name="Dossat C."/>
            <person name="Karoui M.E."/>
            <person name="Frapy E."/>
            <person name="Garry L."/>
            <person name="Ghigo J.M."/>
            <person name="Gilles A.M."/>
            <person name="Johnson J."/>
            <person name="Le Bouguenec C."/>
            <person name="Lescat M."/>
            <person name="Mangenot S."/>
            <person name="Martinez-Jehanne V."/>
            <person name="Matic I."/>
            <person name="Nassif X."/>
            <person name="Oztas S."/>
            <person name="Petit M.A."/>
            <person name="Pichon C."/>
            <person name="Rouy Z."/>
            <person name="Ruf C.S."/>
            <person name="Schneider D."/>
            <person name="Tourret J."/>
            <person name="Vacherie B."/>
            <person name="Vallenet D."/>
            <person name="Medigue C."/>
            <person name="Rocha E.P.C."/>
            <person name="Denamur E."/>
        </authorList>
    </citation>
    <scope>NUCLEOTIDE SEQUENCE [LARGE SCALE GENOMIC DNA]</scope>
    <source>
        <strain>IAI1</strain>
    </source>
</reference>
<proteinExistence type="inferred from homology"/>
<protein>
    <recommendedName>
        <fullName evidence="1">Probable L-ascorbate-6-phosphate lactonase UlaG</fullName>
        <ecNumber evidence="1">3.1.1.-</ecNumber>
    </recommendedName>
    <alternativeName>
        <fullName evidence="1">L-ascorbate utilization protein G</fullName>
    </alternativeName>
</protein>
<accession>B7M8V2</accession>
<gene>
    <name evidence="1" type="primary">ulaG</name>
    <name type="ordered locus">ECIAI1_4425</name>
</gene>
<organism>
    <name type="scientific">Escherichia coli O8 (strain IAI1)</name>
    <dbReference type="NCBI Taxonomy" id="585034"/>
    <lineage>
        <taxon>Bacteria</taxon>
        <taxon>Pseudomonadati</taxon>
        <taxon>Pseudomonadota</taxon>
        <taxon>Gammaproteobacteria</taxon>
        <taxon>Enterobacterales</taxon>
        <taxon>Enterobacteriaceae</taxon>
        <taxon>Escherichia</taxon>
    </lineage>
</organism>
<evidence type="ECO:0000255" key="1">
    <source>
        <dbReference type="HAMAP-Rule" id="MF_01266"/>
    </source>
</evidence>
<comment type="function">
    <text evidence="1">Probably catalyzes the hydrolysis of L-ascorbate-6-P into 3-keto-L-gulonate-6-P. Is essential for L-ascorbate utilization under anaerobic conditions.</text>
</comment>
<comment type="catalytic activity">
    <reaction evidence="1">
        <text>L-ascorbate 6-phosphate + H2O = 3-dehydro-L-gulonate 6-phosphate</text>
        <dbReference type="Rhea" id="RHEA:28803"/>
        <dbReference type="ChEBI" id="CHEBI:15377"/>
        <dbReference type="ChEBI" id="CHEBI:58774"/>
        <dbReference type="ChEBI" id="CHEBI:61698"/>
    </reaction>
</comment>
<comment type="cofactor">
    <cofactor evidence="1">
        <name>a divalent metal cation</name>
        <dbReference type="ChEBI" id="CHEBI:60240"/>
    </cofactor>
</comment>
<comment type="pathway">
    <text evidence="1">Cofactor degradation; L-ascorbate degradation; D-xylulose 5-phosphate from L-ascorbate: step 1/4.</text>
</comment>
<comment type="subcellular location">
    <subcellularLocation>
        <location evidence="1">Cytoplasm</location>
    </subcellularLocation>
</comment>
<comment type="induction">
    <text evidence="1">Induced by L-ascorbate. Repressed by UlaR.</text>
</comment>
<comment type="similarity">
    <text evidence="1">Belongs to the UlaG family.</text>
</comment>
<feature type="chain" id="PRO_1000140094" description="Probable L-ascorbate-6-phosphate lactonase UlaG">
    <location>
        <begin position="1"/>
        <end position="354"/>
    </location>
</feature>
<name>ULAG_ECO8A</name>
<dbReference type="EC" id="3.1.1.-" evidence="1"/>
<dbReference type="EMBL" id="CU928160">
    <property type="protein sequence ID" value="CAR01167.1"/>
    <property type="molecule type" value="Genomic_DNA"/>
</dbReference>
<dbReference type="RefSeq" id="WP_001295191.1">
    <property type="nucleotide sequence ID" value="NC_011741.1"/>
</dbReference>
<dbReference type="SMR" id="B7M8V2"/>
<dbReference type="GeneID" id="93777632"/>
<dbReference type="KEGG" id="ecr:ECIAI1_4425"/>
<dbReference type="HOGENOM" id="CLU_074775_0_0_6"/>
<dbReference type="UniPathway" id="UPA00263">
    <property type="reaction ID" value="UER00377"/>
</dbReference>
<dbReference type="GO" id="GO:0005737">
    <property type="term" value="C:cytoplasm"/>
    <property type="evidence" value="ECO:0007669"/>
    <property type="project" value="UniProtKB-SubCell"/>
</dbReference>
<dbReference type="GO" id="GO:0035460">
    <property type="term" value="F:L-ascorbate 6-phosphate lactonase activity"/>
    <property type="evidence" value="ECO:0007669"/>
    <property type="project" value="InterPro"/>
</dbReference>
<dbReference type="GO" id="GO:0030145">
    <property type="term" value="F:manganese ion binding"/>
    <property type="evidence" value="ECO:0007669"/>
    <property type="project" value="InterPro"/>
</dbReference>
<dbReference type="GO" id="GO:0019854">
    <property type="term" value="P:L-ascorbic acid catabolic process"/>
    <property type="evidence" value="ECO:0007669"/>
    <property type="project" value="UniProtKB-UniRule"/>
</dbReference>
<dbReference type="CDD" id="cd16284">
    <property type="entry name" value="UlaG-like_MBL-fold"/>
    <property type="match status" value="1"/>
</dbReference>
<dbReference type="FunFam" id="3.60.15.10:FF:000004">
    <property type="entry name" value="Probable L-ascorbate-6-phosphate lactonase UlaG"/>
    <property type="match status" value="1"/>
</dbReference>
<dbReference type="Gene3D" id="3.60.15.10">
    <property type="entry name" value="Ribonuclease Z/Hydroxyacylglutathione hydrolase-like"/>
    <property type="match status" value="1"/>
</dbReference>
<dbReference type="HAMAP" id="MF_01266">
    <property type="entry name" value="UlaG"/>
    <property type="match status" value="1"/>
</dbReference>
<dbReference type="InterPro" id="IPR023951">
    <property type="entry name" value="L-ascorbate_6P_UlaG"/>
</dbReference>
<dbReference type="InterPro" id="IPR001279">
    <property type="entry name" value="Metallo-B-lactamas"/>
</dbReference>
<dbReference type="InterPro" id="IPR036866">
    <property type="entry name" value="RibonucZ/Hydroxyglut_hydro"/>
</dbReference>
<dbReference type="InterPro" id="IPR048021">
    <property type="entry name" value="UlaG-like_MBL-fold"/>
</dbReference>
<dbReference type="InterPro" id="IPR050114">
    <property type="entry name" value="UPF0173_UPF0282_UlaG_hydrolase"/>
</dbReference>
<dbReference type="NCBIfam" id="NF008688">
    <property type="entry name" value="PRK11709.1"/>
    <property type="match status" value="1"/>
</dbReference>
<dbReference type="PANTHER" id="PTHR43546:SF9">
    <property type="entry name" value="L-ASCORBATE-6-PHOSPHATE LACTONASE ULAG-RELATED"/>
    <property type="match status" value="1"/>
</dbReference>
<dbReference type="PANTHER" id="PTHR43546">
    <property type="entry name" value="UPF0173 METAL-DEPENDENT HYDROLASE MJ1163-RELATED"/>
    <property type="match status" value="1"/>
</dbReference>
<dbReference type="Pfam" id="PF12706">
    <property type="entry name" value="Lactamase_B_2"/>
    <property type="match status" value="1"/>
</dbReference>
<dbReference type="SUPFAM" id="SSF56281">
    <property type="entry name" value="Metallo-hydrolase/oxidoreductase"/>
    <property type="match status" value="1"/>
</dbReference>
<keyword id="KW-0963">Cytoplasm</keyword>
<keyword id="KW-0378">Hydrolase</keyword>